<evidence type="ECO:0000255" key="1">
    <source>
        <dbReference type="PROSITE-ProRule" id="PRU00669"/>
    </source>
</evidence>
<evidence type="ECO:0000305" key="2"/>
<keyword id="KW-1185">Reference proteome</keyword>
<comment type="function">
    <text evidence="2">Probable pseudophosphatase.</text>
</comment>
<comment type="similarity">
    <text evidence="2">Belongs to the protein-tyrosine phosphatase family. Non-receptor class myotubularin subfamily.</text>
</comment>
<comment type="caution">
    <text evidence="2">Although it belongs to the non-receptor class myotubularin subfamily, lacks the conserved active site cysteine residue at position 337 in the dsPTPase catalytic loop, suggesting that it has no phosphatase activity.</text>
</comment>
<accession>Q2KJ24</accession>
<protein>
    <recommendedName>
        <fullName evidence="2">Myotubularin-related protein 9-like</fullName>
    </recommendedName>
    <alternativeName>
        <fullName evidence="2">Inactive phosphatidylinositol 3-phosphatase 9-like</fullName>
    </alternativeName>
</protein>
<gene>
    <name evidence="2" type="primary">MTMR9L</name>
</gene>
<sequence>MEFAEMIRTGQAQAELLRGPEEPPLRGTLCITGHHLLLSPGPQATPDLWLLLLRNVDSIEKRVAGDSGTITLRCKDLRVLQLDIEGVEATLDIARSIEALSSLESVITSFPFFYRPKGLRLGDAWHFHPPECYYKRVARETNAWRLSEANEDFSLCPSYPRAVIVPRAVDDSAVARSARFRQGGRFPVLSYYHAPSGTVLLRAGQPLTGPQKRRCSEDEELLRAVLAGARPGARGFIVDTRSPQAAKQARMTGGGTEAKAAYPGWKRLHRPLERGRPLQESFVRLVEACGDLEQSMDRWLNRLESCRWLSHVKETLSTACLAAQSMEQEGACILVHGAEGTDSTLLITSLAQLILDPLSRTMAGFQELIEREWVQAGHPFQLRCAHSAFSHARPKHEAPTFLLFLDCVWQLGRQFPLSLEFGEGMLLALFDHAYASPFGTFLCNNEKERCLCEVRTRTHSLWSGLSQPKEQRKLRNPLYVPNPLAIWPSAEPQSLRLWQGLFLRGTRPPEPSEVAWEKVWQIVTDQEKTEGSQPTDSASEPGP</sequence>
<reference key="1">
    <citation type="submission" date="2005-09" db="EMBL/GenBank/DDBJ databases">
        <authorList>
            <consortium name="NIH - Mammalian Gene Collection (MGC) project"/>
        </authorList>
    </citation>
    <scope>NUCLEOTIDE SEQUENCE [LARGE SCALE MRNA]</scope>
    <source>
        <strain>Hereford</strain>
        <tissue>Ascending colon</tissue>
    </source>
</reference>
<proteinExistence type="evidence at transcript level"/>
<organism>
    <name type="scientific">Bos taurus</name>
    <name type="common">Bovine</name>
    <dbReference type="NCBI Taxonomy" id="9913"/>
    <lineage>
        <taxon>Eukaryota</taxon>
        <taxon>Metazoa</taxon>
        <taxon>Chordata</taxon>
        <taxon>Craniata</taxon>
        <taxon>Vertebrata</taxon>
        <taxon>Euteleostomi</taxon>
        <taxon>Mammalia</taxon>
        <taxon>Eutheria</taxon>
        <taxon>Laurasiatheria</taxon>
        <taxon>Artiodactyla</taxon>
        <taxon>Ruminantia</taxon>
        <taxon>Pecora</taxon>
        <taxon>Bovidae</taxon>
        <taxon>Bovinae</taxon>
        <taxon>Bos</taxon>
    </lineage>
</organism>
<dbReference type="EMBL" id="BC105556">
    <property type="protein sequence ID" value="AAI05557.1"/>
    <property type="molecule type" value="mRNA"/>
</dbReference>
<dbReference type="RefSeq" id="NP_001039721.1">
    <property type="nucleotide sequence ID" value="NM_001046256.1"/>
</dbReference>
<dbReference type="RefSeq" id="XP_015315000.1">
    <property type="nucleotide sequence ID" value="XM_015459514.1"/>
</dbReference>
<dbReference type="SMR" id="Q2KJ24"/>
<dbReference type="FunCoup" id="Q2KJ24">
    <property type="interactions" value="455"/>
</dbReference>
<dbReference type="STRING" id="9913.ENSBTAP00000019137"/>
<dbReference type="PaxDb" id="9913-ENSBTAP00000019137"/>
<dbReference type="Ensembl" id="ENSBTAT00000019137.4">
    <property type="protein sequence ID" value="ENSBTAP00000019137.2"/>
    <property type="gene ID" value="ENSBTAG00000014390.4"/>
</dbReference>
<dbReference type="GeneID" id="521746"/>
<dbReference type="KEGG" id="bta:521746"/>
<dbReference type="VEuPathDB" id="HostDB:ENSBTAG00000014390"/>
<dbReference type="eggNOG" id="KOG1089">
    <property type="taxonomic scope" value="Eukaryota"/>
</dbReference>
<dbReference type="GeneTree" id="ENSGT00940000163547"/>
<dbReference type="HOGENOM" id="CLU_001839_3_1_1"/>
<dbReference type="InParanoid" id="Q2KJ24"/>
<dbReference type="OMA" id="EVKTKTH"/>
<dbReference type="OrthoDB" id="271628at2759"/>
<dbReference type="TreeFam" id="TF315197"/>
<dbReference type="Proteomes" id="UP000009136">
    <property type="component" value="Chromosome 2"/>
</dbReference>
<dbReference type="Bgee" id="ENSBTAG00000014390">
    <property type="expression patterns" value="Expressed in saliva-secreting gland and 103 other cell types or tissues"/>
</dbReference>
<dbReference type="GO" id="GO:0005737">
    <property type="term" value="C:cytoplasm"/>
    <property type="evidence" value="ECO:0000318"/>
    <property type="project" value="GO_Central"/>
</dbReference>
<dbReference type="GO" id="GO:0019903">
    <property type="term" value="F:protein phosphatase binding"/>
    <property type="evidence" value="ECO:0000318"/>
    <property type="project" value="GO_Central"/>
</dbReference>
<dbReference type="GO" id="GO:0010507">
    <property type="term" value="P:negative regulation of autophagy"/>
    <property type="evidence" value="ECO:0000318"/>
    <property type="project" value="GO_Central"/>
</dbReference>
<dbReference type="GO" id="GO:0046856">
    <property type="term" value="P:phosphatidylinositol dephosphorylation"/>
    <property type="evidence" value="ECO:0000318"/>
    <property type="project" value="GO_Central"/>
</dbReference>
<dbReference type="CDD" id="cd14536">
    <property type="entry name" value="PTP-MTMR9"/>
    <property type="match status" value="1"/>
</dbReference>
<dbReference type="Gene3D" id="2.30.29.30">
    <property type="entry name" value="Pleckstrin-homology domain (PH domain)/Phosphotyrosine-binding domain (PTB)"/>
    <property type="match status" value="1"/>
</dbReference>
<dbReference type="InterPro" id="IPR030564">
    <property type="entry name" value="Myotubularin"/>
</dbReference>
<dbReference type="InterPro" id="IPR010569">
    <property type="entry name" value="Myotubularin-like_Pase_dom"/>
</dbReference>
<dbReference type="InterPro" id="IPR011993">
    <property type="entry name" value="PH-like_dom_sf"/>
</dbReference>
<dbReference type="InterPro" id="IPR029021">
    <property type="entry name" value="Prot-tyrosine_phosphatase-like"/>
</dbReference>
<dbReference type="PANTHER" id="PTHR10807:SF52">
    <property type="entry name" value="MYOTUBULARIN PHOSPHATASE DOMAIN-CONTAINING PROTEIN"/>
    <property type="match status" value="1"/>
</dbReference>
<dbReference type="PANTHER" id="PTHR10807">
    <property type="entry name" value="MYOTUBULARIN-RELATED"/>
    <property type="match status" value="1"/>
</dbReference>
<dbReference type="Pfam" id="PF06602">
    <property type="entry name" value="Myotub-related"/>
    <property type="match status" value="1"/>
</dbReference>
<dbReference type="Pfam" id="PF21098">
    <property type="entry name" value="PH-GRAM_MTMR6-like"/>
    <property type="match status" value="1"/>
</dbReference>
<dbReference type="SUPFAM" id="SSF52799">
    <property type="entry name" value="(Phosphotyrosine protein) phosphatases II"/>
    <property type="match status" value="1"/>
</dbReference>
<dbReference type="SUPFAM" id="SSF50729">
    <property type="entry name" value="PH domain-like"/>
    <property type="match status" value="1"/>
</dbReference>
<dbReference type="PROSITE" id="PS51339">
    <property type="entry name" value="PPASE_MYOTUBULARIN"/>
    <property type="match status" value="1"/>
</dbReference>
<name>MTM9L_BOVIN</name>
<feature type="chain" id="PRO_0000240348" description="Myotubularin-related protein 9-like">
    <location>
        <begin position="1"/>
        <end position="543"/>
    </location>
</feature>
<feature type="domain" description="Myotubularin phosphatase" evidence="1">
    <location>
        <begin position="124"/>
        <end position="502"/>
    </location>
</feature>